<sequence>NLYQFGGMIGCANKGTRSWLSYVNYGCYCG</sequence>
<accession>P85060</accession>
<protein>
    <recommendedName>
        <fullName>Phospholipase A2 acanmyotoxin-2</fullName>
        <shortName>svPLA2</shortName>
        <ecNumber>3.1.1.4</ecNumber>
    </recommendedName>
    <alternativeName>
        <fullName>Phosphatidylcholine 2-acylhydrolase</fullName>
    </alternativeName>
</protein>
<evidence type="ECO:0000250" key="1"/>
<evidence type="ECO:0000250" key="2">
    <source>
        <dbReference type="UniProtKB" id="P81236"/>
    </source>
</evidence>
<evidence type="ECO:0000255" key="3"/>
<evidence type="ECO:0000255" key="4">
    <source>
        <dbReference type="PROSITE-ProRule" id="PRU10035"/>
    </source>
</evidence>
<evidence type="ECO:0000255" key="5">
    <source>
        <dbReference type="PROSITE-ProRule" id="PRU10036"/>
    </source>
</evidence>
<evidence type="ECO:0000269" key="6">
    <source>
    </source>
</evidence>
<evidence type="ECO:0000303" key="7">
    <source>
    </source>
</evidence>
<evidence type="ECO:0000305" key="8"/>
<proteinExistence type="evidence at protein level"/>
<dbReference type="EC" id="3.1.1.4"/>
<dbReference type="SMR" id="P85060"/>
<dbReference type="GO" id="GO:0005576">
    <property type="term" value="C:extracellular region"/>
    <property type="evidence" value="ECO:0000314"/>
    <property type="project" value="UniProtKB"/>
</dbReference>
<dbReference type="GO" id="GO:0005509">
    <property type="term" value="F:calcium ion binding"/>
    <property type="evidence" value="ECO:0007669"/>
    <property type="project" value="InterPro"/>
</dbReference>
<dbReference type="GO" id="GO:0004623">
    <property type="term" value="F:phospholipase A2 activity"/>
    <property type="evidence" value="ECO:0000314"/>
    <property type="project" value="UniProtKB"/>
</dbReference>
<dbReference type="GO" id="GO:0090729">
    <property type="term" value="F:toxin activity"/>
    <property type="evidence" value="ECO:0007669"/>
    <property type="project" value="UniProtKB-KW"/>
</dbReference>
<dbReference type="GO" id="GO:0050482">
    <property type="term" value="P:arachidonate secretion"/>
    <property type="evidence" value="ECO:0007669"/>
    <property type="project" value="InterPro"/>
</dbReference>
<dbReference type="GO" id="GO:0016042">
    <property type="term" value="P:lipid catabolic process"/>
    <property type="evidence" value="ECO:0007669"/>
    <property type="project" value="UniProtKB-KW"/>
</dbReference>
<dbReference type="GO" id="GO:0006644">
    <property type="term" value="P:phospholipid metabolic process"/>
    <property type="evidence" value="ECO:0007669"/>
    <property type="project" value="InterPro"/>
</dbReference>
<dbReference type="GO" id="GO:0006937">
    <property type="term" value="P:regulation of muscle contraction"/>
    <property type="evidence" value="ECO:0000314"/>
    <property type="project" value="UniProtKB"/>
</dbReference>
<dbReference type="FunFam" id="1.20.90.10:FF:000045">
    <property type="match status" value="1"/>
</dbReference>
<dbReference type="Gene3D" id="1.20.90.10">
    <property type="entry name" value="Phospholipase A2 domain"/>
    <property type="match status" value="1"/>
</dbReference>
<dbReference type="InterPro" id="IPR001211">
    <property type="entry name" value="PLipase_A2"/>
</dbReference>
<dbReference type="InterPro" id="IPR036444">
    <property type="entry name" value="PLipase_A2_dom_sf"/>
</dbReference>
<dbReference type="PRINTS" id="PR00389">
    <property type="entry name" value="PHPHLIPASEA2"/>
</dbReference>
<dbReference type="SUPFAM" id="SSF48619">
    <property type="entry name" value="Phospholipase A2, PLA2"/>
    <property type="match status" value="1"/>
</dbReference>
<feature type="chain" id="PRO_0000271910" description="Phospholipase A2 acanmyotoxin-2">
    <location>
        <begin position="1"/>
        <end position="30" status="greater than"/>
    </location>
</feature>
<feature type="binding site" evidence="1">
    <location>
        <position position="28"/>
    </location>
    <ligand>
        <name>Ca(2+)</name>
        <dbReference type="ChEBI" id="CHEBI:29108"/>
    </ligand>
</feature>
<feature type="binding site" evidence="1">
    <location>
        <position position="30"/>
    </location>
    <ligand>
        <name>Ca(2+)</name>
        <dbReference type="ChEBI" id="CHEBI:29108"/>
    </ligand>
</feature>
<feature type="non-terminal residue" evidence="7">
    <location>
        <position position="30"/>
    </location>
</feature>
<comment type="function">
    <text evidence="6">Snake venom phospholipase A2 (PLA2) that has myotoxic activity but no significant neurotoxicity. PLA2 catalyzes the calcium-dependent hydrolysis of the 2-acyl groups in 3-sn-phosphoglycerides.</text>
</comment>
<comment type="catalytic activity">
    <reaction evidence="4 5 6">
        <text>a 1,2-diacyl-sn-glycero-3-phosphocholine + H2O = a 1-acyl-sn-glycero-3-phosphocholine + a fatty acid + H(+)</text>
        <dbReference type="Rhea" id="RHEA:15801"/>
        <dbReference type="ChEBI" id="CHEBI:15377"/>
        <dbReference type="ChEBI" id="CHEBI:15378"/>
        <dbReference type="ChEBI" id="CHEBI:28868"/>
        <dbReference type="ChEBI" id="CHEBI:57643"/>
        <dbReference type="ChEBI" id="CHEBI:58168"/>
        <dbReference type="EC" id="3.1.1.4"/>
    </reaction>
</comment>
<comment type="cofactor">
    <cofactor evidence="1">
        <name>Ca(2+)</name>
        <dbReference type="ChEBI" id="CHEBI:29108"/>
    </cofactor>
    <text evidence="1">Binds 1 Ca(2+) ion.</text>
</comment>
<comment type="subcellular location">
    <subcellularLocation>
        <location evidence="6">Secreted</location>
    </subcellularLocation>
</comment>
<comment type="tissue specificity">
    <text evidence="6">Expressed by the venom gland.</text>
</comment>
<comment type="PTM">
    <text evidence="2">Contains seven disulfide bonds.</text>
</comment>
<comment type="mass spectrometry"/>
<comment type="similarity">
    <text evidence="3">Belongs to the phospholipase A2 family. Group I subfamily.</text>
</comment>
<reference evidence="8" key="1">
    <citation type="journal article" date="2005" name="Biochem. Pharmacol.">
        <title>Isolation and characterisation of acanmyotoxin-2 and acanmyotoxin-3, myotoxins from the venom of the death adder Acanthophis sp. Seram.</title>
        <authorList>
            <person name="Hart A.J."/>
            <person name="Smith A.I."/>
            <person name="Reeve S."/>
            <person name="Hodgson W.C."/>
        </authorList>
    </citation>
    <scope>PROTEIN SEQUENCE</scope>
    <scope>FUNCTION</scope>
    <scope>CATALYTIC ACTIVITY</scope>
    <scope>SUBCELLULAR LOCATION</scope>
    <scope>TISSUE SPECIFICITY</scope>
    <scope>MASS SPECTROMETRY</scope>
    <source>
        <tissue evidence="6">Venom</tissue>
    </source>
</reference>
<organism>
    <name type="scientific">Acanthophis sp. (strain Seram)</name>
    <name type="common">Seram death adder</name>
    <dbReference type="NCBI Taxonomy" id="412080"/>
    <lineage>
        <taxon>Eukaryota</taxon>
        <taxon>Metazoa</taxon>
        <taxon>Chordata</taxon>
        <taxon>Craniata</taxon>
        <taxon>Vertebrata</taxon>
        <taxon>Euteleostomi</taxon>
        <taxon>Lepidosauria</taxon>
        <taxon>Squamata</taxon>
        <taxon>Bifurcata</taxon>
        <taxon>Unidentata</taxon>
        <taxon>Episquamata</taxon>
        <taxon>Toxicofera</taxon>
        <taxon>Serpentes</taxon>
        <taxon>Colubroidea</taxon>
        <taxon>Elapidae</taxon>
        <taxon>Hydrophiinae</taxon>
        <taxon>Acanthophis</taxon>
    </lineage>
</organism>
<keyword id="KW-0106">Calcium</keyword>
<keyword id="KW-0903">Direct protein sequencing</keyword>
<keyword id="KW-1015">Disulfide bond</keyword>
<keyword id="KW-0378">Hydrolase</keyword>
<keyword id="KW-0442">Lipid degradation</keyword>
<keyword id="KW-0443">Lipid metabolism</keyword>
<keyword id="KW-0479">Metal-binding</keyword>
<keyword id="KW-0959">Myotoxin</keyword>
<keyword id="KW-0964">Secreted</keyword>
<keyword id="KW-0800">Toxin</keyword>
<name>PA22_ACASS</name>